<comment type="subcellular location">
    <subcellularLocation>
        <location evidence="2">Cell membrane</location>
        <topology evidence="2">Multi-pass membrane protein</topology>
    </subcellularLocation>
</comment>
<comment type="similarity">
    <text evidence="2">Belongs to the purine-cytosine permease (2.A.39) family.</text>
</comment>
<keyword id="KW-1003">Cell membrane</keyword>
<keyword id="KW-0472">Membrane</keyword>
<keyword id="KW-1185">Reference proteome</keyword>
<keyword id="KW-0812">Transmembrane</keyword>
<keyword id="KW-1133">Transmembrane helix</keyword>
<keyword id="KW-0813">Transport</keyword>
<protein>
    <recommendedName>
        <fullName>Putative purine-cytosine permease YxlA</fullName>
    </recommendedName>
</protein>
<organism>
    <name type="scientific">Bacillus subtilis (strain 168)</name>
    <dbReference type="NCBI Taxonomy" id="224308"/>
    <lineage>
        <taxon>Bacteria</taxon>
        <taxon>Bacillati</taxon>
        <taxon>Bacillota</taxon>
        <taxon>Bacilli</taxon>
        <taxon>Bacillales</taxon>
        <taxon>Bacillaceae</taxon>
        <taxon>Bacillus</taxon>
    </lineage>
</organism>
<name>YXLA_BACSU</name>
<gene>
    <name type="primary">yxlA</name>
    <name type="ordered locus">BSU38710</name>
</gene>
<proteinExistence type="inferred from homology"/>
<feature type="chain" id="PRO_0000377715" description="Putative purine-cytosine permease YxlA">
    <location>
        <begin position="1"/>
        <end position="457"/>
    </location>
</feature>
<feature type="transmembrane region" description="Helical" evidence="1">
    <location>
        <begin position="24"/>
        <end position="44"/>
    </location>
</feature>
<feature type="transmembrane region" description="Helical" evidence="1">
    <location>
        <begin position="50"/>
        <end position="70"/>
    </location>
</feature>
<feature type="transmembrane region" description="Helical" evidence="1">
    <location>
        <begin position="90"/>
        <end position="110"/>
    </location>
</feature>
<feature type="transmembrane region" description="Helical" evidence="1">
    <location>
        <begin position="127"/>
        <end position="147"/>
    </location>
</feature>
<feature type="transmembrane region" description="Helical" evidence="1">
    <location>
        <begin position="164"/>
        <end position="184"/>
    </location>
</feature>
<feature type="transmembrane region" description="Helical" evidence="1">
    <location>
        <begin position="192"/>
        <end position="212"/>
    </location>
</feature>
<feature type="transmembrane region" description="Helical" evidence="1">
    <location>
        <begin position="228"/>
        <end position="248"/>
    </location>
</feature>
<feature type="transmembrane region" description="Helical" evidence="1">
    <location>
        <begin position="264"/>
        <end position="284"/>
    </location>
</feature>
<feature type="transmembrane region" description="Helical" evidence="1">
    <location>
        <begin position="316"/>
        <end position="336"/>
    </location>
</feature>
<feature type="transmembrane region" description="Helical" evidence="1">
    <location>
        <begin position="341"/>
        <end position="361"/>
    </location>
</feature>
<feature type="transmembrane region" description="Helical" evidence="1">
    <location>
        <begin position="392"/>
        <end position="412"/>
    </location>
</feature>
<feature type="transmembrane region" description="Helical" evidence="1">
    <location>
        <begin position="420"/>
        <end position="440"/>
    </location>
</feature>
<dbReference type="EMBL" id="D83026">
    <property type="protein sequence ID" value="BAA11732.1"/>
    <property type="molecule type" value="Genomic_DNA"/>
</dbReference>
<dbReference type="EMBL" id="AL009126">
    <property type="protein sequence ID" value="CAB15897.1"/>
    <property type="molecule type" value="Genomic_DNA"/>
</dbReference>
<dbReference type="PIR" id="E70081">
    <property type="entry name" value="E70081"/>
</dbReference>
<dbReference type="RefSeq" id="NP_391750.1">
    <property type="nucleotide sequence ID" value="NC_000964.3"/>
</dbReference>
<dbReference type="RefSeq" id="WP_003244111.1">
    <property type="nucleotide sequence ID" value="NZ_OZ025638.1"/>
</dbReference>
<dbReference type="SMR" id="P94369"/>
<dbReference type="FunCoup" id="P94369">
    <property type="interactions" value="132"/>
</dbReference>
<dbReference type="STRING" id="224308.BSU38710"/>
<dbReference type="TCDB" id="2.A.39.1.5">
    <property type="family name" value="the nucleobase:cation symporter-1 (ncs1) family"/>
</dbReference>
<dbReference type="PaxDb" id="224308-BSU38710"/>
<dbReference type="EnsemblBacteria" id="CAB15897">
    <property type="protein sequence ID" value="CAB15897"/>
    <property type="gene ID" value="BSU_38710"/>
</dbReference>
<dbReference type="GeneID" id="937405"/>
<dbReference type="KEGG" id="bsu:BSU38710"/>
<dbReference type="PATRIC" id="fig|224308.179.peg.4190"/>
<dbReference type="eggNOG" id="COG1457">
    <property type="taxonomic scope" value="Bacteria"/>
</dbReference>
<dbReference type="InParanoid" id="P94369"/>
<dbReference type="OrthoDB" id="9809167at2"/>
<dbReference type="PhylomeDB" id="P94369"/>
<dbReference type="BioCyc" id="BSUB:BSU38710-MONOMER"/>
<dbReference type="Proteomes" id="UP000001570">
    <property type="component" value="Chromosome"/>
</dbReference>
<dbReference type="GO" id="GO:0005886">
    <property type="term" value="C:plasma membrane"/>
    <property type="evidence" value="ECO:0000318"/>
    <property type="project" value="GO_Central"/>
</dbReference>
<dbReference type="GO" id="GO:0022857">
    <property type="term" value="F:transmembrane transporter activity"/>
    <property type="evidence" value="ECO:0000318"/>
    <property type="project" value="GO_Central"/>
</dbReference>
<dbReference type="CDD" id="cd11484">
    <property type="entry name" value="SLC-NCS1sbd_CobB-like"/>
    <property type="match status" value="1"/>
</dbReference>
<dbReference type="Gene3D" id="1.10.4160.10">
    <property type="entry name" value="Hydantoin permease"/>
    <property type="match status" value="1"/>
</dbReference>
<dbReference type="InterPro" id="IPR001248">
    <property type="entry name" value="Pur-cyt_permease"/>
</dbReference>
<dbReference type="InterPro" id="IPR026030">
    <property type="entry name" value="Pur-cyt_permease_Fcy2/21/22"/>
</dbReference>
<dbReference type="PANTHER" id="PTHR31806">
    <property type="entry name" value="PURINE-CYTOSINE PERMEASE FCY2-RELATED"/>
    <property type="match status" value="1"/>
</dbReference>
<dbReference type="PANTHER" id="PTHR31806:SF1">
    <property type="entry name" value="PURINE-CYTOSINE PERMEASE FCY2-RELATED"/>
    <property type="match status" value="1"/>
</dbReference>
<dbReference type="Pfam" id="PF02133">
    <property type="entry name" value="Transp_cyt_pur"/>
    <property type="match status" value="1"/>
</dbReference>
<dbReference type="PIRSF" id="PIRSF002744">
    <property type="entry name" value="Pur-cyt_permease"/>
    <property type="match status" value="1"/>
</dbReference>
<sequence length="457" mass="50517">MKVERRTIEYIPNEERHGKAKDLFPVWFGANMHITTLVTGTIPVAMGLNLFWSVAAIICGTLIGAIFMASHSAQGPQLGIPQMIQSRAQFGVIGAILPLFLVMFIYLGFFASSTILAAGTLSSFVPIPGSWSIIGLSAVCFLLTIFGHDLIHKMQKILSWTSFAVFFAATILIFQLPIPAGSWIPGAIDLPIFLVAVSAVATWQLAYAPYVADYSRYLPVKTPASKTFWYSYAGTSVSSIWMMLLGALLTTSLPDFTANSGSQIVQLFGPFSFIMLIIVLFGQMAINVFNLYGAFMSTTTTLEPFLKLKVTPKVRIIMILGVTLVGTVLSLLGQSNFMELFLNFIFFISYFLIPWTAINLVDYYFVRHGKYQVKAMFDVNGPYGKVNWITTIAFVLSILLEIPFINTSFYIGPLAKMFGGGDIAWIIGLAVPSVLYYVLMKPRLKKRAGYQEKLSSL</sequence>
<evidence type="ECO:0000255" key="1"/>
<evidence type="ECO:0000305" key="2"/>
<reference key="1">
    <citation type="journal article" date="1996" name="Microbiology">
        <title>Sequencing of a 65 kb region of the Bacillus subtilis genome containing the lic and cel loci, and creation of a 177 kb contig covering the gnt-sacXY region.</title>
        <authorList>
            <person name="Yoshida K."/>
            <person name="Shindo K."/>
            <person name="Sano H."/>
            <person name="Seki S."/>
            <person name="Fujimura M."/>
            <person name="Yanai N."/>
            <person name="Miwa Y."/>
            <person name="Fujita Y."/>
        </authorList>
    </citation>
    <scope>NUCLEOTIDE SEQUENCE [GENOMIC DNA]</scope>
    <source>
        <strain>168 / BGSC1A1</strain>
    </source>
</reference>
<reference key="2">
    <citation type="journal article" date="1997" name="Nature">
        <title>The complete genome sequence of the Gram-positive bacterium Bacillus subtilis.</title>
        <authorList>
            <person name="Kunst F."/>
            <person name="Ogasawara N."/>
            <person name="Moszer I."/>
            <person name="Albertini A.M."/>
            <person name="Alloni G."/>
            <person name="Azevedo V."/>
            <person name="Bertero M.G."/>
            <person name="Bessieres P."/>
            <person name="Bolotin A."/>
            <person name="Borchert S."/>
            <person name="Borriss R."/>
            <person name="Boursier L."/>
            <person name="Brans A."/>
            <person name="Braun M."/>
            <person name="Brignell S.C."/>
            <person name="Bron S."/>
            <person name="Brouillet S."/>
            <person name="Bruschi C.V."/>
            <person name="Caldwell B."/>
            <person name="Capuano V."/>
            <person name="Carter N.M."/>
            <person name="Choi S.-K."/>
            <person name="Codani J.-J."/>
            <person name="Connerton I.F."/>
            <person name="Cummings N.J."/>
            <person name="Daniel R.A."/>
            <person name="Denizot F."/>
            <person name="Devine K.M."/>
            <person name="Duesterhoeft A."/>
            <person name="Ehrlich S.D."/>
            <person name="Emmerson P.T."/>
            <person name="Entian K.-D."/>
            <person name="Errington J."/>
            <person name="Fabret C."/>
            <person name="Ferrari E."/>
            <person name="Foulger D."/>
            <person name="Fritz C."/>
            <person name="Fujita M."/>
            <person name="Fujita Y."/>
            <person name="Fuma S."/>
            <person name="Galizzi A."/>
            <person name="Galleron N."/>
            <person name="Ghim S.-Y."/>
            <person name="Glaser P."/>
            <person name="Goffeau A."/>
            <person name="Golightly E.J."/>
            <person name="Grandi G."/>
            <person name="Guiseppi G."/>
            <person name="Guy B.J."/>
            <person name="Haga K."/>
            <person name="Haiech J."/>
            <person name="Harwood C.R."/>
            <person name="Henaut A."/>
            <person name="Hilbert H."/>
            <person name="Holsappel S."/>
            <person name="Hosono S."/>
            <person name="Hullo M.-F."/>
            <person name="Itaya M."/>
            <person name="Jones L.-M."/>
            <person name="Joris B."/>
            <person name="Karamata D."/>
            <person name="Kasahara Y."/>
            <person name="Klaerr-Blanchard M."/>
            <person name="Klein C."/>
            <person name="Kobayashi Y."/>
            <person name="Koetter P."/>
            <person name="Koningstein G."/>
            <person name="Krogh S."/>
            <person name="Kumano M."/>
            <person name="Kurita K."/>
            <person name="Lapidus A."/>
            <person name="Lardinois S."/>
            <person name="Lauber J."/>
            <person name="Lazarevic V."/>
            <person name="Lee S.-M."/>
            <person name="Levine A."/>
            <person name="Liu H."/>
            <person name="Masuda S."/>
            <person name="Mauel C."/>
            <person name="Medigue C."/>
            <person name="Medina N."/>
            <person name="Mellado R.P."/>
            <person name="Mizuno M."/>
            <person name="Moestl D."/>
            <person name="Nakai S."/>
            <person name="Noback M."/>
            <person name="Noone D."/>
            <person name="O'Reilly M."/>
            <person name="Ogawa K."/>
            <person name="Ogiwara A."/>
            <person name="Oudega B."/>
            <person name="Park S.-H."/>
            <person name="Parro V."/>
            <person name="Pohl T.M."/>
            <person name="Portetelle D."/>
            <person name="Porwollik S."/>
            <person name="Prescott A.M."/>
            <person name="Presecan E."/>
            <person name="Pujic P."/>
            <person name="Purnelle B."/>
            <person name="Rapoport G."/>
            <person name="Rey M."/>
            <person name="Reynolds S."/>
            <person name="Rieger M."/>
            <person name="Rivolta C."/>
            <person name="Rocha E."/>
            <person name="Roche B."/>
            <person name="Rose M."/>
            <person name="Sadaie Y."/>
            <person name="Sato T."/>
            <person name="Scanlan E."/>
            <person name="Schleich S."/>
            <person name="Schroeter R."/>
            <person name="Scoffone F."/>
            <person name="Sekiguchi J."/>
            <person name="Sekowska A."/>
            <person name="Seror S.J."/>
            <person name="Serror P."/>
            <person name="Shin B.-S."/>
            <person name="Soldo B."/>
            <person name="Sorokin A."/>
            <person name="Tacconi E."/>
            <person name="Takagi T."/>
            <person name="Takahashi H."/>
            <person name="Takemaru K."/>
            <person name="Takeuchi M."/>
            <person name="Tamakoshi A."/>
            <person name="Tanaka T."/>
            <person name="Terpstra P."/>
            <person name="Tognoni A."/>
            <person name="Tosato V."/>
            <person name="Uchiyama S."/>
            <person name="Vandenbol M."/>
            <person name="Vannier F."/>
            <person name="Vassarotti A."/>
            <person name="Viari A."/>
            <person name="Wambutt R."/>
            <person name="Wedler E."/>
            <person name="Wedler H."/>
            <person name="Weitzenegger T."/>
            <person name="Winters P."/>
            <person name="Wipat A."/>
            <person name="Yamamoto H."/>
            <person name="Yamane K."/>
            <person name="Yasumoto K."/>
            <person name="Yata K."/>
            <person name="Yoshida K."/>
            <person name="Yoshikawa H.-F."/>
            <person name="Zumstein E."/>
            <person name="Yoshikawa H."/>
            <person name="Danchin A."/>
        </authorList>
    </citation>
    <scope>NUCLEOTIDE SEQUENCE [LARGE SCALE GENOMIC DNA]</scope>
    <source>
        <strain>168</strain>
    </source>
</reference>
<accession>P94369</accession>
<accession>Q794Y1</accession>